<accession>Q5HP78</accession>
<name>AROB_STAEQ</name>
<proteinExistence type="inferred from homology"/>
<feature type="chain" id="PRO_0000140786" description="3-dehydroquinate synthase">
    <location>
        <begin position="1"/>
        <end position="354"/>
    </location>
</feature>
<feature type="binding site" evidence="1">
    <location>
        <begin position="66"/>
        <end position="71"/>
    </location>
    <ligand>
        <name>NAD(+)</name>
        <dbReference type="ChEBI" id="CHEBI:57540"/>
    </ligand>
</feature>
<feature type="binding site" evidence="1">
    <location>
        <begin position="100"/>
        <end position="104"/>
    </location>
    <ligand>
        <name>NAD(+)</name>
        <dbReference type="ChEBI" id="CHEBI:57540"/>
    </ligand>
</feature>
<feature type="binding site" evidence="1">
    <location>
        <begin position="124"/>
        <end position="125"/>
    </location>
    <ligand>
        <name>NAD(+)</name>
        <dbReference type="ChEBI" id="CHEBI:57540"/>
    </ligand>
</feature>
<feature type="binding site" evidence="1">
    <location>
        <position position="136"/>
    </location>
    <ligand>
        <name>NAD(+)</name>
        <dbReference type="ChEBI" id="CHEBI:57540"/>
    </ligand>
</feature>
<feature type="binding site" evidence="1">
    <location>
        <position position="145"/>
    </location>
    <ligand>
        <name>NAD(+)</name>
        <dbReference type="ChEBI" id="CHEBI:57540"/>
    </ligand>
</feature>
<feature type="binding site" evidence="1">
    <location>
        <begin position="163"/>
        <end position="166"/>
    </location>
    <ligand>
        <name>NAD(+)</name>
        <dbReference type="ChEBI" id="CHEBI:57540"/>
    </ligand>
</feature>
<feature type="binding site" evidence="1">
    <location>
        <position position="178"/>
    </location>
    <ligand>
        <name>Zn(2+)</name>
        <dbReference type="ChEBI" id="CHEBI:29105"/>
    </ligand>
</feature>
<feature type="binding site" evidence="1">
    <location>
        <position position="242"/>
    </location>
    <ligand>
        <name>Zn(2+)</name>
        <dbReference type="ChEBI" id="CHEBI:29105"/>
    </ligand>
</feature>
<feature type="binding site" evidence="1">
    <location>
        <position position="256"/>
    </location>
    <ligand>
        <name>Zn(2+)</name>
        <dbReference type="ChEBI" id="CHEBI:29105"/>
    </ligand>
</feature>
<dbReference type="EC" id="4.2.3.4" evidence="1"/>
<dbReference type="EMBL" id="CP000029">
    <property type="protein sequence ID" value="AAW54426.1"/>
    <property type="molecule type" value="Genomic_DNA"/>
</dbReference>
<dbReference type="RefSeq" id="WP_001831320.1">
    <property type="nucleotide sequence ID" value="NC_002976.3"/>
</dbReference>
<dbReference type="SMR" id="Q5HP78"/>
<dbReference type="STRING" id="176279.SERP1035"/>
<dbReference type="GeneID" id="50018724"/>
<dbReference type="KEGG" id="ser:SERP1035"/>
<dbReference type="eggNOG" id="COG0337">
    <property type="taxonomic scope" value="Bacteria"/>
</dbReference>
<dbReference type="HOGENOM" id="CLU_001201_0_1_9"/>
<dbReference type="UniPathway" id="UPA00053">
    <property type="reaction ID" value="UER00085"/>
</dbReference>
<dbReference type="Proteomes" id="UP000000531">
    <property type="component" value="Chromosome"/>
</dbReference>
<dbReference type="GO" id="GO:0005737">
    <property type="term" value="C:cytoplasm"/>
    <property type="evidence" value="ECO:0007669"/>
    <property type="project" value="UniProtKB-SubCell"/>
</dbReference>
<dbReference type="GO" id="GO:0003856">
    <property type="term" value="F:3-dehydroquinate synthase activity"/>
    <property type="evidence" value="ECO:0007669"/>
    <property type="project" value="UniProtKB-UniRule"/>
</dbReference>
<dbReference type="GO" id="GO:0046872">
    <property type="term" value="F:metal ion binding"/>
    <property type="evidence" value="ECO:0007669"/>
    <property type="project" value="UniProtKB-KW"/>
</dbReference>
<dbReference type="GO" id="GO:0000166">
    <property type="term" value="F:nucleotide binding"/>
    <property type="evidence" value="ECO:0007669"/>
    <property type="project" value="UniProtKB-KW"/>
</dbReference>
<dbReference type="GO" id="GO:0008652">
    <property type="term" value="P:amino acid biosynthetic process"/>
    <property type="evidence" value="ECO:0007669"/>
    <property type="project" value="UniProtKB-KW"/>
</dbReference>
<dbReference type="GO" id="GO:0009073">
    <property type="term" value="P:aromatic amino acid family biosynthetic process"/>
    <property type="evidence" value="ECO:0007669"/>
    <property type="project" value="UniProtKB-KW"/>
</dbReference>
<dbReference type="GO" id="GO:0009423">
    <property type="term" value="P:chorismate biosynthetic process"/>
    <property type="evidence" value="ECO:0007669"/>
    <property type="project" value="UniProtKB-UniRule"/>
</dbReference>
<dbReference type="CDD" id="cd08195">
    <property type="entry name" value="DHQS"/>
    <property type="match status" value="1"/>
</dbReference>
<dbReference type="FunFam" id="3.40.50.1970:FF:000007">
    <property type="entry name" value="Pentafunctional AROM polypeptide"/>
    <property type="match status" value="1"/>
</dbReference>
<dbReference type="Gene3D" id="3.40.50.1970">
    <property type="match status" value="1"/>
</dbReference>
<dbReference type="Gene3D" id="1.20.1090.10">
    <property type="entry name" value="Dehydroquinate synthase-like - alpha domain"/>
    <property type="match status" value="1"/>
</dbReference>
<dbReference type="HAMAP" id="MF_00110">
    <property type="entry name" value="DHQ_synthase"/>
    <property type="match status" value="1"/>
</dbReference>
<dbReference type="InterPro" id="IPR050071">
    <property type="entry name" value="Dehydroquinate_synthase"/>
</dbReference>
<dbReference type="InterPro" id="IPR016037">
    <property type="entry name" value="DHQ_synth_AroB"/>
</dbReference>
<dbReference type="InterPro" id="IPR030963">
    <property type="entry name" value="DHQ_synth_fam"/>
</dbReference>
<dbReference type="InterPro" id="IPR030960">
    <property type="entry name" value="DHQS/DOIS_N"/>
</dbReference>
<dbReference type="InterPro" id="IPR056179">
    <property type="entry name" value="DHQS_C"/>
</dbReference>
<dbReference type="NCBIfam" id="TIGR01357">
    <property type="entry name" value="aroB"/>
    <property type="match status" value="1"/>
</dbReference>
<dbReference type="PANTHER" id="PTHR43622">
    <property type="entry name" value="3-DEHYDROQUINATE SYNTHASE"/>
    <property type="match status" value="1"/>
</dbReference>
<dbReference type="PANTHER" id="PTHR43622:SF7">
    <property type="entry name" value="3-DEHYDROQUINATE SYNTHASE, CHLOROPLASTIC"/>
    <property type="match status" value="1"/>
</dbReference>
<dbReference type="Pfam" id="PF01761">
    <property type="entry name" value="DHQ_synthase"/>
    <property type="match status" value="1"/>
</dbReference>
<dbReference type="Pfam" id="PF24621">
    <property type="entry name" value="DHQS_C"/>
    <property type="match status" value="1"/>
</dbReference>
<dbReference type="PIRSF" id="PIRSF001455">
    <property type="entry name" value="DHQ_synth"/>
    <property type="match status" value="1"/>
</dbReference>
<dbReference type="SUPFAM" id="SSF56796">
    <property type="entry name" value="Dehydroquinate synthase-like"/>
    <property type="match status" value="1"/>
</dbReference>
<comment type="function">
    <text evidence="1">Catalyzes the conversion of 3-deoxy-D-arabino-heptulosonate 7-phosphate (DAHP) to dehydroquinate (DHQ).</text>
</comment>
<comment type="catalytic activity">
    <reaction evidence="1">
        <text>7-phospho-2-dehydro-3-deoxy-D-arabino-heptonate = 3-dehydroquinate + phosphate</text>
        <dbReference type="Rhea" id="RHEA:21968"/>
        <dbReference type="ChEBI" id="CHEBI:32364"/>
        <dbReference type="ChEBI" id="CHEBI:43474"/>
        <dbReference type="ChEBI" id="CHEBI:58394"/>
        <dbReference type="EC" id="4.2.3.4"/>
    </reaction>
</comment>
<comment type="cofactor">
    <cofactor evidence="1">
        <name>NAD(+)</name>
        <dbReference type="ChEBI" id="CHEBI:57540"/>
    </cofactor>
</comment>
<comment type="cofactor">
    <cofactor evidence="1">
        <name>Co(2+)</name>
        <dbReference type="ChEBI" id="CHEBI:48828"/>
    </cofactor>
    <cofactor evidence="1">
        <name>Zn(2+)</name>
        <dbReference type="ChEBI" id="CHEBI:29105"/>
    </cofactor>
    <text evidence="1">Binds 1 divalent metal cation per subunit. Can use either Co(2+) or Zn(2+).</text>
</comment>
<comment type="pathway">
    <text evidence="1">Metabolic intermediate biosynthesis; chorismate biosynthesis; chorismate from D-erythrose 4-phosphate and phosphoenolpyruvate: step 2/7.</text>
</comment>
<comment type="subcellular location">
    <subcellularLocation>
        <location evidence="1">Cytoplasm</location>
    </subcellularLocation>
</comment>
<comment type="similarity">
    <text evidence="1">Belongs to the sugar phosphate cyclases superfamily. Dehydroquinate synthase family.</text>
</comment>
<sequence length="354" mass="40555">MELKTSYASDNYPIIVKHHAINSLERYIKNEEQRFFIIDKQVYNLFVDKLEALAQKFDAKCIVIPSGETSKSFEHYHRTIEYLLSHQLTRQTCIVAIGGGATGDFAGFIAATLLRGVSFVQVPTTILAHDSSVGGKVGINSEHGKNLIGAFYRPKAVIYDLDFLETLPYSEILSGYAEVYKHALLNGEKSTKNIESNFTSNKVLQALKNLDYYLFEGIKTKLNIVVEDEKEKGKRKFLNLGHTFGHAIEYEHKIPHGHAVMIGILYQFIVANHLFETNYNIQHYINYMKKLKYPLSIIKQLHFEDTYHFMLLDKKNDYNGIQMVLLKNLGKPVVTHVDKDTLLSAFEELQSYFK</sequence>
<gene>
    <name evidence="1" type="primary">aroB</name>
    <name type="ordered locus">SERP1035</name>
</gene>
<reference key="1">
    <citation type="journal article" date="2005" name="J. Bacteriol.">
        <title>Insights on evolution of virulence and resistance from the complete genome analysis of an early methicillin-resistant Staphylococcus aureus strain and a biofilm-producing methicillin-resistant Staphylococcus epidermidis strain.</title>
        <authorList>
            <person name="Gill S.R."/>
            <person name="Fouts D.E."/>
            <person name="Archer G.L."/>
            <person name="Mongodin E.F."/>
            <person name="DeBoy R.T."/>
            <person name="Ravel J."/>
            <person name="Paulsen I.T."/>
            <person name="Kolonay J.F."/>
            <person name="Brinkac L.M."/>
            <person name="Beanan M.J."/>
            <person name="Dodson R.J."/>
            <person name="Daugherty S.C."/>
            <person name="Madupu R."/>
            <person name="Angiuoli S.V."/>
            <person name="Durkin A.S."/>
            <person name="Haft D.H."/>
            <person name="Vamathevan J.J."/>
            <person name="Khouri H."/>
            <person name="Utterback T.R."/>
            <person name="Lee C."/>
            <person name="Dimitrov G."/>
            <person name="Jiang L."/>
            <person name="Qin H."/>
            <person name="Weidman J."/>
            <person name="Tran K."/>
            <person name="Kang K.H."/>
            <person name="Hance I.R."/>
            <person name="Nelson K.E."/>
            <person name="Fraser C.M."/>
        </authorList>
    </citation>
    <scope>NUCLEOTIDE SEQUENCE [LARGE SCALE GENOMIC DNA]</scope>
    <source>
        <strain>ATCC 35984 / DSM 28319 / BCRC 17069 / CCUG 31568 / BM 3577 / RP62A</strain>
    </source>
</reference>
<organism>
    <name type="scientific">Staphylococcus epidermidis (strain ATCC 35984 / DSM 28319 / BCRC 17069 / CCUG 31568 / BM 3577 / RP62A)</name>
    <dbReference type="NCBI Taxonomy" id="176279"/>
    <lineage>
        <taxon>Bacteria</taxon>
        <taxon>Bacillati</taxon>
        <taxon>Bacillota</taxon>
        <taxon>Bacilli</taxon>
        <taxon>Bacillales</taxon>
        <taxon>Staphylococcaceae</taxon>
        <taxon>Staphylococcus</taxon>
    </lineage>
</organism>
<keyword id="KW-0028">Amino-acid biosynthesis</keyword>
<keyword id="KW-0057">Aromatic amino acid biosynthesis</keyword>
<keyword id="KW-0170">Cobalt</keyword>
<keyword id="KW-0963">Cytoplasm</keyword>
<keyword id="KW-0456">Lyase</keyword>
<keyword id="KW-0479">Metal-binding</keyword>
<keyword id="KW-0520">NAD</keyword>
<keyword id="KW-0547">Nucleotide-binding</keyword>
<keyword id="KW-1185">Reference proteome</keyword>
<keyword id="KW-0862">Zinc</keyword>
<protein>
    <recommendedName>
        <fullName evidence="1">3-dehydroquinate synthase</fullName>
        <shortName evidence="1">DHQS</shortName>
        <ecNumber evidence="1">4.2.3.4</ecNumber>
    </recommendedName>
</protein>
<evidence type="ECO:0000255" key="1">
    <source>
        <dbReference type="HAMAP-Rule" id="MF_00110"/>
    </source>
</evidence>